<feature type="transit peptide" description="Mitochondrion" evidence="1">
    <location>
        <begin position="1"/>
        <end position="6"/>
    </location>
</feature>
<feature type="chain" id="PRO_0000413260" description="Glutamyl-tRNA(Gln) amidotransferase subunit B, mitochondrial">
    <location>
        <begin position="7"/>
        <end position="511"/>
    </location>
</feature>
<name>GATB_LODEL</name>
<proteinExistence type="inferred from homology"/>
<evidence type="ECO:0000255" key="1">
    <source>
        <dbReference type="HAMAP-Rule" id="MF_03147"/>
    </source>
</evidence>
<comment type="function">
    <text evidence="1">Allows the formation of correctly charged Gln-tRNA(Gln) through the transamidation of misacylated Glu-tRNA(Gln) in the mitochondria. The reaction takes place in the presence of glutamine and ATP through an activated gamma-phospho-Glu-tRNA(Gln).</text>
</comment>
<comment type="catalytic activity">
    <reaction evidence="1">
        <text>L-glutamyl-tRNA(Gln) + L-glutamine + ATP + H2O = L-glutaminyl-tRNA(Gln) + L-glutamate + ADP + phosphate + H(+)</text>
        <dbReference type="Rhea" id="RHEA:17521"/>
        <dbReference type="Rhea" id="RHEA-COMP:9681"/>
        <dbReference type="Rhea" id="RHEA-COMP:9684"/>
        <dbReference type="ChEBI" id="CHEBI:15377"/>
        <dbReference type="ChEBI" id="CHEBI:15378"/>
        <dbReference type="ChEBI" id="CHEBI:29985"/>
        <dbReference type="ChEBI" id="CHEBI:30616"/>
        <dbReference type="ChEBI" id="CHEBI:43474"/>
        <dbReference type="ChEBI" id="CHEBI:58359"/>
        <dbReference type="ChEBI" id="CHEBI:78520"/>
        <dbReference type="ChEBI" id="CHEBI:78521"/>
        <dbReference type="ChEBI" id="CHEBI:456216"/>
    </reaction>
</comment>
<comment type="subunit">
    <text evidence="1">Subunit of the heterotrimeric GatFAB amidotransferase (AdT) complex, composed of A, B and F subunits.</text>
</comment>
<comment type="subcellular location">
    <subcellularLocation>
        <location evidence="1">Mitochondrion</location>
    </subcellularLocation>
</comment>
<comment type="similarity">
    <text evidence="1">Belongs to the GatB/GatE family. GatB subfamily.</text>
</comment>
<protein>
    <recommendedName>
        <fullName evidence="1">Glutamyl-tRNA(Gln) amidotransferase subunit B, mitochondrial</fullName>
        <shortName evidence="1">Glu-AdT subunit B</shortName>
        <ecNumber evidence="1">6.3.5.-</ecNumber>
    </recommendedName>
</protein>
<sequence>MLRRYLATSASATASATATASASASASASKNSIKSNFKFHPEYKFKCGLEIHTQLKTKYKLFSLSRTSFNDTPNSHISYFDVGLPGTQPKLNPEALYLALKAAVALNCEVQQMSRFDRKHYFYPDQPMGYQITQNFHPLAKNGYLTFNEFDGVEIATSKDGANDTIRIEKIQLEQDTGKKYGDIIDYNRAGIPLIEVVTKPDFDSIEKVLAFVKKYQLLVRHFDICSGDLETGAIRVDVNVNVNDSPRVEIKNISTTGDIVNAIKYEYNRQVETLTKGGSLEQQTRNWDGIRTNLARSKENAIDYRYFPDSELPQIILSPDIAHDIKTSLPESPDSLLARLTSSPHNLQLAHAKNLITEPELLHYYESFFAIHRKPDADKWVFQELLTAFAKLGKTFDVEIVKPNVFAHLVSMDLNLVSKRLILKHMVQNEVSLDKAIEQLGFKEDQKPTTELAEDICKEIILTNQQIVDRIQSGHAKAVEVLVGNAMKKTRGKFAAQTFRSLFKEQLGIS</sequence>
<dbReference type="EC" id="6.3.5.-" evidence="1"/>
<dbReference type="EMBL" id="CH981525">
    <property type="protein sequence ID" value="EDK43551.1"/>
    <property type="molecule type" value="Genomic_DNA"/>
</dbReference>
<dbReference type="RefSeq" id="XP_001526901.1">
    <property type="nucleotide sequence ID" value="XM_001526851.1"/>
</dbReference>
<dbReference type="SMR" id="A5DWJ3"/>
<dbReference type="FunCoup" id="A5DWJ3">
    <property type="interactions" value="355"/>
</dbReference>
<dbReference type="STRING" id="379508.A5DWJ3"/>
<dbReference type="GeneID" id="5234086"/>
<dbReference type="KEGG" id="lel:PVL30_001702"/>
<dbReference type="eggNOG" id="KOG2438">
    <property type="taxonomic scope" value="Eukaryota"/>
</dbReference>
<dbReference type="HOGENOM" id="CLU_019240_4_0_1"/>
<dbReference type="InParanoid" id="A5DWJ3"/>
<dbReference type="OMA" id="QIYAYEN"/>
<dbReference type="OrthoDB" id="1722066at2759"/>
<dbReference type="Proteomes" id="UP000001996">
    <property type="component" value="Unassembled WGS sequence"/>
</dbReference>
<dbReference type="GO" id="GO:0030956">
    <property type="term" value="C:glutamyl-tRNA(Gln) amidotransferase complex"/>
    <property type="evidence" value="ECO:0007669"/>
    <property type="project" value="UniProtKB-UniRule"/>
</dbReference>
<dbReference type="GO" id="GO:0005739">
    <property type="term" value="C:mitochondrion"/>
    <property type="evidence" value="ECO:0007669"/>
    <property type="project" value="UniProtKB-SubCell"/>
</dbReference>
<dbReference type="GO" id="GO:0005524">
    <property type="term" value="F:ATP binding"/>
    <property type="evidence" value="ECO:0007669"/>
    <property type="project" value="UniProtKB-KW"/>
</dbReference>
<dbReference type="GO" id="GO:0050567">
    <property type="term" value="F:glutaminyl-tRNA synthase (glutamine-hydrolyzing) activity"/>
    <property type="evidence" value="ECO:0007669"/>
    <property type="project" value="UniProtKB-UniRule"/>
</dbReference>
<dbReference type="GO" id="GO:0070681">
    <property type="term" value="P:glutaminyl-tRNAGln biosynthesis via transamidation"/>
    <property type="evidence" value="ECO:0007669"/>
    <property type="project" value="UniProtKB-UniRule"/>
</dbReference>
<dbReference type="GO" id="GO:0032543">
    <property type="term" value="P:mitochondrial translation"/>
    <property type="evidence" value="ECO:0007669"/>
    <property type="project" value="UniProtKB-UniRule"/>
</dbReference>
<dbReference type="Gene3D" id="1.10.10.410">
    <property type="match status" value="1"/>
</dbReference>
<dbReference type="HAMAP" id="MF_00121">
    <property type="entry name" value="GatB"/>
    <property type="match status" value="1"/>
</dbReference>
<dbReference type="InterPro" id="IPR017959">
    <property type="entry name" value="Asn/Gln-tRNA_amidoTrfase_suB/E"/>
</dbReference>
<dbReference type="InterPro" id="IPR006075">
    <property type="entry name" value="Asn/Gln-tRNA_Trfase_suB/E_cat"/>
</dbReference>
<dbReference type="InterPro" id="IPR018027">
    <property type="entry name" value="Asn/Gln_amidotransferase"/>
</dbReference>
<dbReference type="InterPro" id="IPR004413">
    <property type="entry name" value="GatB"/>
</dbReference>
<dbReference type="InterPro" id="IPR023168">
    <property type="entry name" value="GatB_Yqey_C_2"/>
</dbReference>
<dbReference type="InterPro" id="IPR017958">
    <property type="entry name" value="Gln-tRNA_amidoTrfase_suB_CS"/>
</dbReference>
<dbReference type="InterPro" id="IPR014746">
    <property type="entry name" value="Gln_synth/guanido_kin_cat_dom"/>
</dbReference>
<dbReference type="NCBIfam" id="TIGR00133">
    <property type="entry name" value="gatB"/>
    <property type="match status" value="1"/>
</dbReference>
<dbReference type="NCBIfam" id="NF004012">
    <property type="entry name" value="PRK05477.1-2"/>
    <property type="match status" value="1"/>
</dbReference>
<dbReference type="PANTHER" id="PTHR11659">
    <property type="entry name" value="GLUTAMYL-TRNA GLN AMIDOTRANSFERASE SUBUNIT B MITOCHONDRIAL AND PROKARYOTIC PET112-RELATED"/>
    <property type="match status" value="1"/>
</dbReference>
<dbReference type="PANTHER" id="PTHR11659:SF0">
    <property type="entry name" value="GLUTAMYL-TRNA(GLN) AMIDOTRANSFERASE SUBUNIT B, MITOCHONDRIAL"/>
    <property type="match status" value="1"/>
</dbReference>
<dbReference type="Pfam" id="PF02934">
    <property type="entry name" value="GatB_N"/>
    <property type="match status" value="1"/>
</dbReference>
<dbReference type="Pfam" id="PF02637">
    <property type="entry name" value="GatB_Yqey"/>
    <property type="match status" value="1"/>
</dbReference>
<dbReference type="SMART" id="SM00845">
    <property type="entry name" value="GatB_Yqey"/>
    <property type="match status" value="1"/>
</dbReference>
<dbReference type="SUPFAM" id="SSF55931">
    <property type="entry name" value="Glutamine synthetase/guanido kinase"/>
    <property type="match status" value="1"/>
</dbReference>
<dbReference type="PROSITE" id="PS01234">
    <property type="entry name" value="GATB"/>
    <property type="match status" value="1"/>
</dbReference>
<organism>
    <name type="scientific">Lodderomyces elongisporus (strain ATCC 11503 / CBS 2605 / JCM 1781 / NBRC 1676 / NRRL YB-4239)</name>
    <name type="common">Yeast</name>
    <name type="synonym">Saccharomyces elongisporus</name>
    <dbReference type="NCBI Taxonomy" id="379508"/>
    <lineage>
        <taxon>Eukaryota</taxon>
        <taxon>Fungi</taxon>
        <taxon>Dikarya</taxon>
        <taxon>Ascomycota</taxon>
        <taxon>Saccharomycotina</taxon>
        <taxon>Pichiomycetes</taxon>
        <taxon>Debaryomycetaceae</taxon>
        <taxon>Candida/Lodderomyces clade</taxon>
        <taxon>Lodderomyces</taxon>
    </lineage>
</organism>
<keyword id="KW-0067">ATP-binding</keyword>
<keyword id="KW-0436">Ligase</keyword>
<keyword id="KW-0496">Mitochondrion</keyword>
<keyword id="KW-0547">Nucleotide-binding</keyword>
<keyword id="KW-0648">Protein biosynthesis</keyword>
<keyword id="KW-1185">Reference proteome</keyword>
<keyword id="KW-0809">Transit peptide</keyword>
<gene>
    <name evidence="1" type="primary">PET112</name>
    <name type="ORF">LELG_01729</name>
</gene>
<accession>A5DWJ3</accession>
<reference key="1">
    <citation type="journal article" date="2009" name="Nature">
        <title>Evolution of pathogenicity and sexual reproduction in eight Candida genomes.</title>
        <authorList>
            <person name="Butler G."/>
            <person name="Rasmussen M.D."/>
            <person name="Lin M.F."/>
            <person name="Santos M.A.S."/>
            <person name="Sakthikumar S."/>
            <person name="Munro C.A."/>
            <person name="Rheinbay E."/>
            <person name="Grabherr M."/>
            <person name="Forche A."/>
            <person name="Reedy J.L."/>
            <person name="Agrafioti I."/>
            <person name="Arnaud M.B."/>
            <person name="Bates S."/>
            <person name="Brown A.J.P."/>
            <person name="Brunke S."/>
            <person name="Costanzo M.C."/>
            <person name="Fitzpatrick D.A."/>
            <person name="de Groot P.W.J."/>
            <person name="Harris D."/>
            <person name="Hoyer L.L."/>
            <person name="Hube B."/>
            <person name="Klis F.M."/>
            <person name="Kodira C."/>
            <person name="Lennard N."/>
            <person name="Logue M.E."/>
            <person name="Martin R."/>
            <person name="Neiman A.M."/>
            <person name="Nikolaou E."/>
            <person name="Quail M.A."/>
            <person name="Quinn J."/>
            <person name="Santos M.C."/>
            <person name="Schmitzberger F.F."/>
            <person name="Sherlock G."/>
            <person name="Shah P."/>
            <person name="Silverstein K.A.T."/>
            <person name="Skrzypek M.S."/>
            <person name="Soll D."/>
            <person name="Staggs R."/>
            <person name="Stansfield I."/>
            <person name="Stumpf M.P.H."/>
            <person name="Sudbery P.E."/>
            <person name="Srikantha T."/>
            <person name="Zeng Q."/>
            <person name="Berman J."/>
            <person name="Berriman M."/>
            <person name="Heitman J."/>
            <person name="Gow N.A.R."/>
            <person name="Lorenz M.C."/>
            <person name="Birren B.W."/>
            <person name="Kellis M."/>
            <person name="Cuomo C.A."/>
        </authorList>
    </citation>
    <scope>NUCLEOTIDE SEQUENCE [LARGE SCALE GENOMIC DNA]</scope>
    <source>
        <strain>ATCC 11503 / BCRC 21390 / CBS 2605 / JCM 1781 / NBRC 1676 / NRRL YB-4239</strain>
    </source>
</reference>